<evidence type="ECO:0000255" key="1">
    <source>
        <dbReference type="HAMAP-Rule" id="MF_01360"/>
    </source>
</evidence>
<name>Y198_PROM1</name>
<protein>
    <recommendedName>
        <fullName evidence="1">UPF0367 protein NATL1_01981</fullName>
    </recommendedName>
</protein>
<sequence length="86" mass="9768">MYCIELTIKLSPMPLVVQRKEHGEAKRLYSDVVESIKNGNPRLLELTCEKVEDKRITVLVSEITAVQIYEKTSSSTSKRPGFSLQN</sequence>
<feature type="chain" id="PRO_1000067774" description="UPF0367 protein NATL1_01981">
    <location>
        <begin position="1"/>
        <end position="86"/>
    </location>
</feature>
<proteinExistence type="inferred from homology"/>
<organism>
    <name type="scientific">Prochlorococcus marinus (strain NATL1A)</name>
    <dbReference type="NCBI Taxonomy" id="167555"/>
    <lineage>
        <taxon>Bacteria</taxon>
        <taxon>Bacillati</taxon>
        <taxon>Cyanobacteriota</taxon>
        <taxon>Cyanophyceae</taxon>
        <taxon>Synechococcales</taxon>
        <taxon>Prochlorococcaceae</taxon>
        <taxon>Prochlorococcus</taxon>
    </lineage>
</organism>
<accession>A2BZV2</accession>
<reference key="1">
    <citation type="journal article" date="2007" name="PLoS Genet.">
        <title>Patterns and implications of gene gain and loss in the evolution of Prochlorococcus.</title>
        <authorList>
            <person name="Kettler G.C."/>
            <person name="Martiny A.C."/>
            <person name="Huang K."/>
            <person name="Zucker J."/>
            <person name="Coleman M.L."/>
            <person name="Rodrigue S."/>
            <person name="Chen F."/>
            <person name="Lapidus A."/>
            <person name="Ferriera S."/>
            <person name="Johnson J."/>
            <person name="Steglich C."/>
            <person name="Church G.M."/>
            <person name="Richardson P."/>
            <person name="Chisholm S.W."/>
        </authorList>
    </citation>
    <scope>NUCLEOTIDE SEQUENCE [LARGE SCALE GENOMIC DNA]</scope>
    <source>
        <strain>NATL1A</strain>
    </source>
</reference>
<comment type="similarity">
    <text evidence="1">Belongs to the UPF0367 family.</text>
</comment>
<gene>
    <name type="ordered locus">NATL1_01981</name>
</gene>
<dbReference type="EMBL" id="CP000553">
    <property type="protein sequence ID" value="ABM74762.1"/>
    <property type="molecule type" value="Genomic_DNA"/>
</dbReference>
<dbReference type="RefSeq" id="WP_011822986.1">
    <property type="nucleotide sequence ID" value="NC_008819.1"/>
</dbReference>
<dbReference type="KEGG" id="pme:NATL1_01981"/>
<dbReference type="eggNOG" id="ENOG5032YB3">
    <property type="taxonomic scope" value="Bacteria"/>
</dbReference>
<dbReference type="HOGENOM" id="CLU_180777_0_0_3"/>
<dbReference type="Proteomes" id="UP000002592">
    <property type="component" value="Chromosome"/>
</dbReference>
<dbReference type="HAMAP" id="MF_01360">
    <property type="entry name" value="UPF0367"/>
    <property type="match status" value="1"/>
</dbReference>
<dbReference type="InterPro" id="IPR020885">
    <property type="entry name" value="UPF0367"/>
</dbReference>
<dbReference type="NCBIfam" id="NF010236">
    <property type="entry name" value="PRK13683.1"/>
    <property type="match status" value="1"/>
</dbReference>